<protein>
    <recommendedName>
        <fullName evidence="1">Holliday junction branch migration complex subunit RuvB</fullName>
        <ecNumber evidence="1">3.6.4.-</ecNumber>
    </recommendedName>
</protein>
<evidence type="ECO:0000255" key="1">
    <source>
        <dbReference type="HAMAP-Rule" id="MF_00016"/>
    </source>
</evidence>
<name>RUVB_EHRRW</name>
<dbReference type="EC" id="3.6.4.-" evidence="1"/>
<dbReference type="EMBL" id="CR767821">
    <property type="protein sequence ID" value="CAH58409.1"/>
    <property type="molecule type" value="Genomic_DNA"/>
</dbReference>
<dbReference type="EMBL" id="CR925678">
    <property type="protein sequence ID" value="CAI27204.1"/>
    <property type="molecule type" value="Genomic_DNA"/>
</dbReference>
<dbReference type="SMR" id="Q5HAK4"/>
<dbReference type="KEGG" id="eru:Erum6770"/>
<dbReference type="KEGG" id="erw:ERWE_CDS_07100"/>
<dbReference type="eggNOG" id="COG2255">
    <property type="taxonomic scope" value="Bacteria"/>
</dbReference>
<dbReference type="HOGENOM" id="CLU_055599_1_0_5"/>
<dbReference type="Proteomes" id="UP000001021">
    <property type="component" value="Chromosome"/>
</dbReference>
<dbReference type="GO" id="GO:0005737">
    <property type="term" value="C:cytoplasm"/>
    <property type="evidence" value="ECO:0007669"/>
    <property type="project" value="UniProtKB-SubCell"/>
</dbReference>
<dbReference type="GO" id="GO:0048476">
    <property type="term" value="C:Holliday junction resolvase complex"/>
    <property type="evidence" value="ECO:0007669"/>
    <property type="project" value="UniProtKB-UniRule"/>
</dbReference>
<dbReference type="GO" id="GO:0005524">
    <property type="term" value="F:ATP binding"/>
    <property type="evidence" value="ECO:0007669"/>
    <property type="project" value="UniProtKB-UniRule"/>
</dbReference>
<dbReference type="GO" id="GO:0016887">
    <property type="term" value="F:ATP hydrolysis activity"/>
    <property type="evidence" value="ECO:0007669"/>
    <property type="project" value="InterPro"/>
</dbReference>
<dbReference type="GO" id="GO:0000400">
    <property type="term" value="F:four-way junction DNA binding"/>
    <property type="evidence" value="ECO:0007669"/>
    <property type="project" value="UniProtKB-UniRule"/>
</dbReference>
<dbReference type="GO" id="GO:0009378">
    <property type="term" value="F:four-way junction helicase activity"/>
    <property type="evidence" value="ECO:0007669"/>
    <property type="project" value="InterPro"/>
</dbReference>
<dbReference type="GO" id="GO:0006310">
    <property type="term" value="P:DNA recombination"/>
    <property type="evidence" value="ECO:0007669"/>
    <property type="project" value="UniProtKB-UniRule"/>
</dbReference>
<dbReference type="GO" id="GO:0006281">
    <property type="term" value="P:DNA repair"/>
    <property type="evidence" value="ECO:0007669"/>
    <property type="project" value="UniProtKB-UniRule"/>
</dbReference>
<dbReference type="CDD" id="cd00009">
    <property type="entry name" value="AAA"/>
    <property type="match status" value="1"/>
</dbReference>
<dbReference type="Gene3D" id="1.10.8.60">
    <property type="match status" value="1"/>
</dbReference>
<dbReference type="Gene3D" id="3.40.50.300">
    <property type="entry name" value="P-loop containing nucleotide triphosphate hydrolases"/>
    <property type="match status" value="1"/>
</dbReference>
<dbReference type="Gene3D" id="1.10.10.10">
    <property type="entry name" value="Winged helix-like DNA-binding domain superfamily/Winged helix DNA-binding domain"/>
    <property type="match status" value="1"/>
</dbReference>
<dbReference type="HAMAP" id="MF_00016">
    <property type="entry name" value="DNA_HJ_migration_RuvB"/>
    <property type="match status" value="1"/>
</dbReference>
<dbReference type="InterPro" id="IPR003593">
    <property type="entry name" value="AAA+_ATPase"/>
</dbReference>
<dbReference type="InterPro" id="IPR041445">
    <property type="entry name" value="AAA_lid_4"/>
</dbReference>
<dbReference type="InterPro" id="IPR004605">
    <property type="entry name" value="DNA_helicase_Holl-junc_RuvB"/>
</dbReference>
<dbReference type="InterPro" id="IPR027417">
    <property type="entry name" value="P-loop_NTPase"/>
</dbReference>
<dbReference type="InterPro" id="IPR008824">
    <property type="entry name" value="RuvB-like_N"/>
</dbReference>
<dbReference type="InterPro" id="IPR008823">
    <property type="entry name" value="RuvB_C"/>
</dbReference>
<dbReference type="InterPro" id="IPR036388">
    <property type="entry name" value="WH-like_DNA-bd_sf"/>
</dbReference>
<dbReference type="InterPro" id="IPR036390">
    <property type="entry name" value="WH_DNA-bd_sf"/>
</dbReference>
<dbReference type="NCBIfam" id="NF000868">
    <property type="entry name" value="PRK00080.1"/>
    <property type="match status" value="1"/>
</dbReference>
<dbReference type="NCBIfam" id="TIGR00635">
    <property type="entry name" value="ruvB"/>
    <property type="match status" value="1"/>
</dbReference>
<dbReference type="PANTHER" id="PTHR42848">
    <property type="match status" value="1"/>
</dbReference>
<dbReference type="PANTHER" id="PTHR42848:SF1">
    <property type="entry name" value="HOLLIDAY JUNCTION BRANCH MIGRATION COMPLEX SUBUNIT RUVB"/>
    <property type="match status" value="1"/>
</dbReference>
<dbReference type="Pfam" id="PF17864">
    <property type="entry name" value="AAA_lid_4"/>
    <property type="match status" value="1"/>
</dbReference>
<dbReference type="Pfam" id="PF05491">
    <property type="entry name" value="RuvB_C"/>
    <property type="match status" value="1"/>
</dbReference>
<dbReference type="Pfam" id="PF05496">
    <property type="entry name" value="RuvB_N"/>
    <property type="match status" value="1"/>
</dbReference>
<dbReference type="SMART" id="SM00382">
    <property type="entry name" value="AAA"/>
    <property type="match status" value="1"/>
</dbReference>
<dbReference type="SUPFAM" id="SSF52540">
    <property type="entry name" value="P-loop containing nucleoside triphosphate hydrolases"/>
    <property type="match status" value="1"/>
</dbReference>
<dbReference type="SUPFAM" id="SSF46785">
    <property type="entry name" value="Winged helix' DNA-binding domain"/>
    <property type="match status" value="1"/>
</dbReference>
<proteinExistence type="inferred from homology"/>
<gene>
    <name evidence="1" type="primary">ruvB</name>
    <name type="ordered locus">Erum6770</name>
    <name type="ordered locus">ERWE_CDS_07100</name>
</gene>
<organism>
    <name type="scientific">Ehrlichia ruminantium (strain Welgevonden)</name>
    <dbReference type="NCBI Taxonomy" id="254945"/>
    <lineage>
        <taxon>Bacteria</taxon>
        <taxon>Pseudomonadati</taxon>
        <taxon>Pseudomonadota</taxon>
        <taxon>Alphaproteobacteria</taxon>
        <taxon>Rickettsiales</taxon>
        <taxon>Anaplasmataceae</taxon>
        <taxon>Ehrlichia</taxon>
    </lineage>
</organism>
<reference key="1">
    <citation type="journal article" date="2005" name="Proc. Natl. Acad. Sci. U.S.A.">
        <title>The genome of the heartwater agent Ehrlichia ruminantium contains multiple tandem repeats of actively variable copy number.</title>
        <authorList>
            <person name="Collins N.E."/>
            <person name="Liebenberg J."/>
            <person name="de Villiers E.P."/>
            <person name="Brayton K.A."/>
            <person name="Louw E."/>
            <person name="Pretorius A."/>
            <person name="Faber F.E."/>
            <person name="van Heerden H."/>
            <person name="Josemans A."/>
            <person name="van Kleef M."/>
            <person name="Steyn H.C."/>
            <person name="van Strijp M.F."/>
            <person name="Zweygarth E."/>
            <person name="Jongejan F."/>
            <person name="Maillard J.C."/>
            <person name="Berthier D."/>
            <person name="Botha M."/>
            <person name="Joubert F."/>
            <person name="Corton C.H."/>
            <person name="Thomson N.R."/>
            <person name="Allsopp M.T."/>
            <person name="Allsopp B.A."/>
        </authorList>
    </citation>
    <scope>NUCLEOTIDE SEQUENCE [LARGE SCALE GENOMIC DNA]</scope>
    <source>
        <strain>Welgevonden</strain>
    </source>
</reference>
<reference key="2">
    <citation type="journal article" date="2006" name="J. Bacteriol.">
        <title>Comparative genomic analysis of three strains of Ehrlichia ruminantium reveals an active process of genome size plasticity.</title>
        <authorList>
            <person name="Frutos R."/>
            <person name="Viari A."/>
            <person name="Ferraz C."/>
            <person name="Morgat A."/>
            <person name="Eychenie S."/>
            <person name="Kandassamy Y."/>
            <person name="Chantal I."/>
            <person name="Bensaid A."/>
            <person name="Coissac E."/>
            <person name="Vachiery N."/>
            <person name="Demaille J."/>
            <person name="Martinez D."/>
        </authorList>
    </citation>
    <scope>NUCLEOTIDE SEQUENCE [LARGE SCALE GENOMIC DNA]</scope>
    <source>
        <strain>Welgevonden</strain>
    </source>
</reference>
<sequence>MFMKDILQSSECIEDQQNISMRPNLLDEFIGQSSVVSNLKIFIDAAYERKEPIDHILLYGPPGLGKTTLAHIIAKELKVNFRSTAGPLLSKAGDLAAILTNLQARDVLFIDEIHRLNRNIEEILYSAMEDFSLDIIVGEGCGARTLRVDIPPFTLIGATTRIGLLSNPLRDRFGIPMHLEFYSTEELTKVIKRAAKVIHTNISNNGAEEISLRSRGTPRIALRLLRRIRDFISVTKQDTITHEFADQALLRLGIDKLGLDRQDIKYLQFIYEANNPIGIDTISSALSEDTGNIEETIEPYLIKINFIQRTPRGRVITQKAISYLNEQTYNM</sequence>
<accession>Q5HAK4</accession>
<accession>Q5FDF8</accession>
<keyword id="KW-0067">ATP-binding</keyword>
<keyword id="KW-0963">Cytoplasm</keyword>
<keyword id="KW-0227">DNA damage</keyword>
<keyword id="KW-0233">DNA recombination</keyword>
<keyword id="KW-0234">DNA repair</keyword>
<keyword id="KW-0238">DNA-binding</keyword>
<keyword id="KW-0378">Hydrolase</keyword>
<keyword id="KW-0547">Nucleotide-binding</keyword>
<feature type="chain" id="PRO_0000235368" description="Holliday junction branch migration complex subunit RuvB">
    <location>
        <begin position="1"/>
        <end position="331"/>
    </location>
</feature>
<feature type="region of interest" description="Large ATPase domain (RuvB-L)" evidence="1">
    <location>
        <begin position="4"/>
        <end position="182"/>
    </location>
</feature>
<feature type="region of interest" description="Small ATPAse domain (RuvB-S)" evidence="1">
    <location>
        <begin position="183"/>
        <end position="253"/>
    </location>
</feature>
<feature type="region of interest" description="Head domain (RuvB-H)" evidence="1">
    <location>
        <begin position="256"/>
        <end position="331"/>
    </location>
</feature>
<feature type="binding site" evidence="1">
    <location>
        <position position="22"/>
    </location>
    <ligand>
        <name>ATP</name>
        <dbReference type="ChEBI" id="CHEBI:30616"/>
    </ligand>
</feature>
<feature type="binding site" evidence="1">
    <location>
        <position position="63"/>
    </location>
    <ligand>
        <name>ATP</name>
        <dbReference type="ChEBI" id="CHEBI:30616"/>
    </ligand>
</feature>
<feature type="binding site" evidence="1">
    <location>
        <position position="66"/>
    </location>
    <ligand>
        <name>ATP</name>
        <dbReference type="ChEBI" id="CHEBI:30616"/>
    </ligand>
</feature>
<feature type="binding site" evidence="1">
    <location>
        <position position="67"/>
    </location>
    <ligand>
        <name>ATP</name>
        <dbReference type="ChEBI" id="CHEBI:30616"/>
    </ligand>
</feature>
<feature type="binding site" evidence="1">
    <location>
        <position position="67"/>
    </location>
    <ligand>
        <name>Mg(2+)</name>
        <dbReference type="ChEBI" id="CHEBI:18420"/>
    </ligand>
</feature>
<feature type="binding site" evidence="1">
    <location>
        <position position="68"/>
    </location>
    <ligand>
        <name>ATP</name>
        <dbReference type="ChEBI" id="CHEBI:30616"/>
    </ligand>
</feature>
<feature type="binding site" evidence="1">
    <location>
        <begin position="129"/>
        <end position="131"/>
    </location>
    <ligand>
        <name>ATP</name>
        <dbReference type="ChEBI" id="CHEBI:30616"/>
    </ligand>
</feature>
<feature type="binding site" evidence="1">
    <location>
        <position position="172"/>
    </location>
    <ligand>
        <name>ATP</name>
        <dbReference type="ChEBI" id="CHEBI:30616"/>
    </ligand>
</feature>
<feature type="binding site" evidence="1">
    <location>
        <position position="182"/>
    </location>
    <ligand>
        <name>ATP</name>
        <dbReference type="ChEBI" id="CHEBI:30616"/>
    </ligand>
</feature>
<feature type="binding site" evidence="1">
    <location>
        <position position="219"/>
    </location>
    <ligand>
        <name>ATP</name>
        <dbReference type="ChEBI" id="CHEBI:30616"/>
    </ligand>
</feature>
<feature type="binding site" evidence="1">
    <location>
        <position position="309"/>
    </location>
    <ligand>
        <name>DNA</name>
        <dbReference type="ChEBI" id="CHEBI:16991"/>
    </ligand>
</feature>
<feature type="binding site" evidence="1">
    <location>
        <position position="314"/>
    </location>
    <ligand>
        <name>DNA</name>
        <dbReference type="ChEBI" id="CHEBI:16991"/>
    </ligand>
</feature>
<comment type="function">
    <text evidence="1">The RuvA-RuvB-RuvC complex processes Holliday junction (HJ) DNA during genetic recombination and DNA repair, while the RuvA-RuvB complex plays an important role in the rescue of blocked DNA replication forks via replication fork reversal (RFR). RuvA specifically binds to HJ cruciform DNA, conferring on it an open structure. The RuvB hexamer acts as an ATP-dependent pump, pulling dsDNA into and through the RuvAB complex. RuvB forms 2 homohexamers on either side of HJ DNA bound by 1 or 2 RuvA tetramers; 4 subunits per hexamer contact DNA at a time. Coordinated motions by a converter formed by DNA-disengaged RuvB subunits stimulates ATP hydrolysis and nucleotide exchange. Immobilization of the converter enables RuvB to convert the ATP-contained energy into a lever motion, pulling 2 nucleotides of DNA out of the RuvA tetramer per ATP hydrolyzed, thus driving DNA branch migration. The RuvB motors rotate together with the DNA substrate, which together with the progressing nucleotide cycle form the mechanistic basis for DNA recombination by continuous HJ branch migration. Branch migration allows RuvC to scan DNA until it finds its consensus sequence, where it cleaves and resolves cruciform DNA.</text>
</comment>
<comment type="catalytic activity">
    <reaction evidence="1">
        <text>ATP + H2O = ADP + phosphate + H(+)</text>
        <dbReference type="Rhea" id="RHEA:13065"/>
        <dbReference type="ChEBI" id="CHEBI:15377"/>
        <dbReference type="ChEBI" id="CHEBI:15378"/>
        <dbReference type="ChEBI" id="CHEBI:30616"/>
        <dbReference type="ChEBI" id="CHEBI:43474"/>
        <dbReference type="ChEBI" id="CHEBI:456216"/>
    </reaction>
</comment>
<comment type="subunit">
    <text evidence="1">Homohexamer. Forms an RuvA(8)-RuvB(12)-Holliday junction (HJ) complex. HJ DNA is sandwiched between 2 RuvA tetramers; dsDNA enters through RuvA and exits via RuvB. An RuvB hexamer assembles on each DNA strand where it exits the tetramer. Each RuvB hexamer is contacted by two RuvA subunits (via domain III) on 2 adjacent RuvB subunits; this complex drives branch migration. In the full resolvosome a probable DNA-RuvA(4)-RuvB(12)-RuvC(2) complex forms which resolves the HJ.</text>
</comment>
<comment type="subcellular location">
    <subcellularLocation>
        <location evidence="1">Cytoplasm</location>
    </subcellularLocation>
</comment>
<comment type="domain">
    <text evidence="1">Has 3 domains, the large (RuvB-L) and small ATPase (RuvB-S) domains and the C-terminal head (RuvB-H) domain. The head domain binds DNA, while the ATPase domains jointly bind ATP, ADP or are empty depending on the state of the subunit in the translocation cycle. During a single DNA translocation step the structure of each domain remains the same, but their relative positions change.</text>
</comment>
<comment type="similarity">
    <text evidence="1">Belongs to the RuvB family.</text>
</comment>